<protein>
    <recommendedName>
        <fullName>Uncharacterized protein YkgA</fullName>
        <ecNumber>3.5.3.-</ecNumber>
    </recommendedName>
</protein>
<comment type="similarity">
    <text evidence="2">Belongs to the DDAH family.</text>
</comment>
<evidence type="ECO:0000255" key="1"/>
<evidence type="ECO:0000305" key="2"/>
<feature type="chain" id="PRO_0000171124" description="Uncharacterized protein YkgA">
    <location>
        <begin position="1"/>
        <end position="286"/>
    </location>
</feature>
<feature type="active site" description="Proton donor" evidence="1">
    <location>
        <position position="183"/>
    </location>
</feature>
<feature type="active site" description="Nucleophile" evidence="1">
    <location>
        <position position="277"/>
    </location>
</feature>
<feature type="sequence conflict" description="In Ref. 1; CAA05582." evidence="2" ref="1">
    <original>NRHVNQQLSKRGYHIIEIDLSEIIKSGGSFRCCTMPLIRGE</original>
    <variation>QPPCQSTAIEKRLSHYRN</variation>
    <location>
        <begin position="246"/>
        <end position="286"/>
    </location>
</feature>
<dbReference type="EC" id="3.5.3.-"/>
<dbReference type="EMBL" id="AJ002571">
    <property type="protein sequence ID" value="CAA05582.1"/>
    <property type="molecule type" value="Genomic_DNA"/>
</dbReference>
<dbReference type="EMBL" id="AL009126">
    <property type="protein sequence ID" value="CAB13159.2"/>
    <property type="molecule type" value="Genomic_DNA"/>
</dbReference>
<dbReference type="PIR" id="C69856">
    <property type="entry name" value="C69856"/>
</dbReference>
<dbReference type="RefSeq" id="WP_003245320.1">
    <property type="nucleotide sequence ID" value="NZ_OZ025638.1"/>
</dbReference>
<dbReference type="SMR" id="O34497"/>
<dbReference type="FunCoup" id="O34497">
    <property type="interactions" value="76"/>
</dbReference>
<dbReference type="STRING" id="224308.BSU13020"/>
<dbReference type="PaxDb" id="224308-BSU13020"/>
<dbReference type="EnsemblBacteria" id="CAB13159">
    <property type="protein sequence ID" value="CAB13159"/>
    <property type="gene ID" value="BSU_13020"/>
</dbReference>
<dbReference type="GeneID" id="939864"/>
<dbReference type="KEGG" id="bsu:BSU13020"/>
<dbReference type="PATRIC" id="fig|224308.179.peg.1414"/>
<dbReference type="eggNOG" id="COG1834">
    <property type="taxonomic scope" value="Bacteria"/>
</dbReference>
<dbReference type="InParanoid" id="O34497"/>
<dbReference type="OrthoDB" id="9814070at2"/>
<dbReference type="PhylomeDB" id="O34497"/>
<dbReference type="BioCyc" id="BSUB:BSU13020-MONOMER"/>
<dbReference type="Proteomes" id="UP000001570">
    <property type="component" value="Chromosome"/>
</dbReference>
<dbReference type="GO" id="GO:0016990">
    <property type="term" value="F:arginine deiminase activity"/>
    <property type="evidence" value="ECO:0000318"/>
    <property type="project" value="GO_Central"/>
</dbReference>
<dbReference type="GO" id="GO:0019546">
    <property type="term" value="P:arginine deiminase pathway"/>
    <property type="evidence" value="ECO:0000318"/>
    <property type="project" value="GO_Central"/>
</dbReference>
<dbReference type="CDD" id="cd21113">
    <property type="entry name" value="amidinotransferase-like"/>
    <property type="match status" value="1"/>
</dbReference>
<dbReference type="Gene3D" id="3.75.10.10">
    <property type="entry name" value="L-arginine/glycine Amidinotransferase, Chain A"/>
    <property type="match status" value="1"/>
</dbReference>
<dbReference type="PANTHER" id="PTHR47271">
    <property type="entry name" value="ARGININE DEIMINASE"/>
    <property type="match status" value="1"/>
</dbReference>
<dbReference type="PANTHER" id="PTHR47271:SF2">
    <property type="entry name" value="ARGININE DEIMINASE"/>
    <property type="match status" value="1"/>
</dbReference>
<dbReference type="Pfam" id="PF19420">
    <property type="entry name" value="DDAH_eukar"/>
    <property type="match status" value="1"/>
</dbReference>
<dbReference type="SUPFAM" id="SSF55909">
    <property type="entry name" value="Pentein"/>
    <property type="match status" value="1"/>
</dbReference>
<organism>
    <name type="scientific">Bacillus subtilis (strain 168)</name>
    <dbReference type="NCBI Taxonomy" id="224308"/>
    <lineage>
        <taxon>Bacteria</taxon>
        <taxon>Bacillati</taxon>
        <taxon>Bacillota</taxon>
        <taxon>Bacilli</taxon>
        <taxon>Bacillales</taxon>
        <taxon>Bacillaceae</taxon>
        <taxon>Bacillus</taxon>
    </lineage>
</organism>
<gene>
    <name type="primary">ykgA</name>
    <name type="ordered locus">BSU13020</name>
</gene>
<sequence>MDVSIPKSQHKTVCRTEYGTLQKVILCKPEHMTIKDVINETQKHFEDDNIHVKTANDQHSRLVEALRSHNVEVVLLPVRDGLPEQVFTRDIGFVIGEKAFLSSMTEPIRQGEEAVIKDFFHSQGISYTRMLDTSIEGGDVIIDDDIVYVGISQRTDISAIGQLEEALPEYTIVPVKLHEKFLHLDCVFNIISESEALIYSQAIEPDAADMLAKRYDLIEVPEDEQFTLGTNVLSIGKKTIISLPGNRHVNQQLSKRGYHIIEIDLSEIIKSGGSFRCCTMPLIRGE</sequence>
<reference key="1">
    <citation type="submission" date="1997-11" db="EMBL/GenBank/DDBJ databases">
        <title>Sequence of the Bacillus subtilis genome between xlyA and ykoR.</title>
        <authorList>
            <person name="Devine K.M."/>
        </authorList>
    </citation>
    <scope>NUCLEOTIDE SEQUENCE [GENOMIC DNA]</scope>
    <source>
        <strain>168</strain>
    </source>
</reference>
<reference key="2">
    <citation type="journal article" date="1997" name="Nature">
        <title>The complete genome sequence of the Gram-positive bacterium Bacillus subtilis.</title>
        <authorList>
            <person name="Kunst F."/>
            <person name="Ogasawara N."/>
            <person name="Moszer I."/>
            <person name="Albertini A.M."/>
            <person name="Alloni G."/>
            <person name="Azevedo V."/>
            <person name="Bertero M.G."/>
            <person name="Bessieres P."/>
            <person name="Bolotin A."/>
            <person name="Borchert S."/>
            <person name="Borriss R."/>
            <person name="Boursier L."/>
            <person name="Brans A."/>
            <person name="Braun M."/>
            <person name="Brignell S.C."/>
            <person name="Bron S."/>
            <person name="Brouillet S."/>
            <person name="Bruschi C.V."/>
            <person name="Caldwell B."/>
            <person name="Capuano V."/>
            <person name="Carter N.M."/>
            <person name="Choi S.-K."/>
            <person name="Codani J.-J."/>
            <person name="Connerton I.F."/>
            <person name="Cummings N.J."/>
            <person name="Daniel R.A."/>
            <person name="Denizot F."/>
            <person name="Devine K.M."/>
            <person name="Duesterhoeft A."/>
            <person name="Ehrlich S.D."/>
            <person name="Emmerson P.T."/>
            <person name="Entian K.-D."/>
            <person name="Errington J."/>
            <person name="Fabret C."/>
            <person name="Ferrari E."/>
            <person name="Foulger D."/>
            <person name="Fritz C."/>
            <person name="Fujita M."/>
            <person name="Fujita Y."/>
            <person name="Fuma S."/>
            <person name="Galizzi A."/>
            <person name="Galleron N."/>
            <person name="Ghim S.-Y."/>
            <person name="Glaser P."/>
            <person name="Goffeau A."/>
            <person name="Golightly E.J."/>
            <person name="Grandi G."/>
            <person name="Guiseppi G."/>
            <person name="Guy B.J."/>
            <person name="Haga K."/>
            <person name="Haiech J."/>
            <person name="Harwood C.R."/>
            <person name="Henaut A."/>
            <person name="Hilbert H."/>
            <person name="Holsappel S."/>
            <person name="Hosono S."/>
            <person name="Hullo M.-F."/>
            <person name="Itaya M."/>
            <person name="Jones L.-M."/>
            <person name="Joris B."/>
            <person name="Karamata D."/>
            <person name="Kasahara Y."/>
            <person name="Klaerr-Blanchard M."/>
            <person name="Klein C."/>
            <person name="Kobayashi Y."/>
            <person name="Koetter P."/>
            <person name="Koningstein G."/>
            <person name="Krogh S."/>
            <person name="Kumano M."/>
            <person name="Kurita K."/>
            <person name="Lapidus A."/>
            <person name="Lardinois S."/>
            <person name="Lauber J."/>
            <person name="Lazarevic V."/>
            <person name="Lee S.-M."/>
            <person name="Levine A."/>
            <person name="Liu H."/>
            <person name="Masuda S."/>
            <person name="Mauel C."/>
            <person name="Medigue C."/>
            <person name="Medina N."/>
            <person name="Mellado R.P."/>
            <person name="Mizuno M."/>
            <person name="Moestl D."/>
            <person name="Nakai S."/>
            <person name="Noback M."/>
            <person name="Noone D."/>
            <person name="O'Reilly M."/>
            <person name="Ogawa K."/>
            <person name="Ogiwara A."/>
            <person name="Oudega B."/>
            <person name="Park S.-H."/>
            <person name="Parro V."/>
            <person name="Pohl T.M."/>
            <person name="Portetelle D."/>
            <person name="Porwollik S."/>
            <person name="Prescott A.M."/>
            <person name="Presecan E."/>
            <person name="Pujic P."/>
            <person name="Purnelle B."/>
            <person name="Rapoport G."/>
            <person name="Rey M."/>
            <person name="Reynolds S."/>
            <person name="Rieger M."/>
            <person name="Rivolta C."/>
            <person name="Rocha E."/>
            <person name="Roche B."/>
            <person name="Rose M."/>
            <person name="Sadaie Y."/>
            <person name="Sato T."/>
            <person name="Scanlan E."/>
            <person name="Schleich S."/>
            <person name="Schroeter R."/>
            <person name="Scoffone F."/>
            <person name="Sekiguchi J."/>
            <person name="Sekowska A."/>
            <person name="Seror S.J."/>
            <person name="Serror P."/>
            <person name="Shin B.-S."/>
            <person name="Soldo B."/>
            <person name="Sorokin A."/>
            <person name="Tacconi E."/>
            <person name="Takagi T."/>
            <person name="Takahashi H."/>
            <person name="Takemaru K."/>
            <person name="Takeuchi M."/>
            <person name="Tamakoshi A."/>
            <person name="Tanaka T."/>
            <person name="Terpstra P."/>
            <person name="Tognoni A."/>
            <person name="Tosato V."/>
            <person name="Uchiyama S."/>
            <person name="Vandenbol M."/>
            <person name="Vannier F."/>
            <person name="Vassarotti A."/>
            <person name="Viari A."/>
            <person name="Wambutt R."/>
            <person name="Wedler E."/>
            <person name="Wedler H."/>
            <person name="Weitzenegger T."/>
            <person name="Winters P."/>
            <person name="Wipat A."/>
            <person name="Yamamoto H."/>
            <person name="Yamane K."/>
            <person name="Yasumoto K."/>
            <person name="Yata K."/>
            <person name="Yoshida K."/>
            <person name="Yoshikawa H.-F."/>
            <person name="Zumstein E."/>
            <person name="Yoshikawa H."/>
            <person name="Danchin A."/>
        </authorList>
    </citation>
    <scope>NUCLEOTIDE SEQUENCE [LARGE SCALE GENOMIC DNA]</scope>
    <source>
        <strain>168</strain>
    </source>
</reference>
<reference key="3">
    <citation type="journal article" date="2009" name="Microbiology">
        <title>From a consortium sequence to a unified sequence: the Bacillus subtilis 168 reference genome a decade later.</title>
        <authorList>
            <person name="Barbe V."/>
            <person name="Cruveiller S."/>
            <person name="Kunst F."/>
            <person name="Lenoble P."/>
            <person name="Meurice G."/>
            <person name="Sekowska A."/>
            <person name="Vallenet D."/>
            <person name="Wang T."/>
            <person name="Moszer I."/>
            <person name="Medigue C."/>
            <person name="Danchin A."/>
        </authorList>
    </citation>
    <scope>SEQUENCE REVISION TO C-TERMINUS</scope>
</reference>
<proteinExistence type="inferred from homology"/>
<keyword id="KW-0378">Hydrolase</keyword>
<keyword id="KW-1185">Reference proteome</keyword>
<accession>O34497</accession>
<name>YKGA_BACSU</name>